<reference key="1">
    <citation type="submission" date="2006-01" db="EMBL/GenBank/DDBJ databases">
        <title>Complete sequence of Anaeromyxobacter dehalogenans 2CP-C.</title>
        <authorList>
            <person name="Copeland A."/>
            <person name="Lucas S."/>
            <person name="Lapidus A."/>
            <person name="Barry K."/>
            <person name="Detter J.C."/>
            <person name="Glavina T."/>
            <person name="Hammon N."/>
            <person name="Israni S."/>
            <person name="Pitluck S."/>
            <person name="Brettin T."/>
            <person name="Bruce D."/>
            <person name="Han C."/>
            <person name="Tapia R."/>
            <person name="Gilna P."/>
            <person name="Kiss H."/>
            <person name="Schmutz J."/>
            <person name="Larimer F."/>
            <person name="Land M."/>
            <person name="Kyrpides N."/>
            <person name="Anderson I."/>
            <person name="Sanford R.A."/>
            <person name="Ritalahti K.M."/>
            <person name="Thomas H.S."/>
            <person name="Kirby J.R."/>
            <person name="Zhulin I.B."/>
            <person name="Loeffler F.E."/>
            <person name="Richardson P."/>
        </authorList>
    </citation>
    <scope>NUCLEOTIDE SEQUENCE [LARGE SCALE GENOMIC DNA]</scope>
    <source>
        <strain>2CP-C</strain>
    </source>
</reference>
<dbReference type="EMBL" id="CP000251">
    <property type="protein sequence ID" value="ABC84101.1"/>
    <property type="molecule type" value="Genomic_DNA"/>
</dbReference>
<dbReference type="RefSeq" id="WP_011423383.1">
    <property type="nucleotide sequence ID" value="NC_007760.1"/>
</dbReference>
<dbReference type="SMR" id="Q2IHP6"/>
<dbReference type="STRING" id="290397.Adeh_4338"/>
<dbReference type="KEGG" id="ade:Adeh_4338"/>
<dbReference type="eggNOG" id="COG0711">
    <property type="taxonomic scope" value="Bacteria"/>
</dbReference>
<dbReference type="HOGENOM" id="CLU_079215_4_1_7"/>
<dbReference type="OrthoDB" id="9795289at2"/>
<dbReference type="Proteomes" id="UP000001935">
    <property type="component" value="Chromosome"/>
</dbReference>
<dbReference type="GO" id="GO:0005886">
    <property type="term" value="C:plasma membrane"/>
    <property type="evidence" value="ECO:0007669"/>
    <property type="project" value="UniProtKB-SubCell"/>
</dbReference>
<dbReference type="GO" id="GO:0045259">
    <property type="term" value="C:proton-transporting ATP synthase complex"/>
    <property type="evidence" value="ECO:0007669"/>
    <property type="project" value="UniProtKB-KW"/>
</dbReference>
<dbReference type="GO" id="GO:0046933">
    <property type="term" value="F:proton-transporting ATP synthase activity, rotational mechanism"/>
    <property type="evidence" value="ECO:0007669"/>
    <property type="project" value="UniProtKB-UniRule"/>
</dbReference>
<dbReference type="GO" id="GO:0046961">
    <property type="term" value="F:proton-transporting ATPase activity, rotational mechanism"/>
    <property type="evidence" value="ECO:0007669"/>
    <property type="project" value="TreeGrafter"/>
</dbReference>
<dbReference type="CDD" id="cd06503">
    <property type="entry name" value="ATP-synt_Fo_b"/>
    <property type="match status" value="1"/>
</dbReference>
<dbReference type="HAMAP" id="MF_01398">
    <property type="entry name" value="ATP_synth_b_bprime"/>
    <property type="match status" value="1"/>
</dbReference>
<dbReference type="InterPro" id="IPR002146">
    <property type="entry name" value="ATP_synth_b/b'su_bac/chlpt"/>
</dbReference>
<dbReference type="InterPro" id="IPR005864">
    <property type="entry name" value="ATP_synth_F0_bsu_bac"/>
</dbReference>
<dbReference type="InterPro" id="IPR050059">
    <property type="entry name" value="ATP_synthase_B_chain"/>
</dbReference>
<dbReference type="NCBIfam" id="TIGR01144">
    <property type="entry name" value="ATP_synt_b"/>
    <property type="match status" value="1"/>
</dbReference>
<dbReference type="PANTHER" id="PTHR33445:SF1">
    <property type="entry name" value="ATP SYNTHASE SUBUNIT B"/>
    <property type="match status" value="1"/>
</dbReference>
<dbReference type="PANTHER" id="PTHR33445">
    <property type="entry name" value="ATP SYNTHASE SUBUNIT B', CHLOROPLASTIC"/>
    <property type="match status" value="1"/>
</dbReference>
<dbReference type="Pfam" id="PF00430">
    <property type="entry name" value="ATP-synt_B"/>
    <property type="match status" value="1"/>
</dbReference>
<protein>
    <recommendedName>
        <fullName evidence="1">ATP synthase subunit b</fullName>
    </recommendedName>
    <alternativeName>
        <fullName evidence="1">ATP synthase F(0) sector subunit b</fullName>
    </alternativeName>
    <alternativeName>
        <fullName evidence="1">ATPase subunit I</fullName>
    </alternativeName>
    <alternativeName>
        <fullName evidence="1">F-type ATPase subunit b</fullName>
        <shortName evidence="1">F-ATPase subunit b</shortName>
    </alternativeName>
</protein>
<feature type="chain" id="PRO_0000368310" description="ATP synthase subunit b">
    <location>
        <begin position="1"/>
        <end position="179"/>
    </location>
</feature>
<feature type="transmembrane region" description="Helical" evidence="1">
    <location>
        <begin position="27"/>
        <end position="47"/>
    </location>
</feature>
<comment type="function">
    <text evidence="1">F(1)F(0) ATP synthase produces ATP from ADP in the presence of a proton or sodium gradient. F-type ATPases consist of two structural domains, F(1) containing the extramembraneous catalytic core and F(0) containing the membrane proton channel, linked together by a central stalk and a peripheral stalk. During catalysis, ATP synthesis in the catalytic domain of F(1) is coupled via a rotary mechanism of the central stalk subunits to proton translocation.</text>
</comment>
<comment type="function">
    <text evidence="1">Component of the F(0) channel, it forms part of the peripheral stalk, linking F(1) to F(0).</text>
</comment>
<comment type="subunit">
    <text evidence="1">F-type ATPases have 2 components, F(1) - the catalytic core - and F(0) - the membrane proton channel. F(1) has five subunits: alpha(3), beta(3), gamma(1), delta(1), epsilon(1). F(0) has three main subunits: a(1), b(2) and c(10-14). The alpha and beta chains form an alternating ring which encloses part of the gamma chain. F(1) is attached to F(0) by a central stalk formed by the gamma and epsilon chains, while a peripheral stalk is formed by the delta and b chains.</text>
</comment>
<comment type="subcellular location">
    <subcellularLocation>
        <location evidence="1">Cell inner membrane</location>
        <topology evidence="1">Single-pass membrane protein</topology>
    </subcellularLocation>
</comment>
<comment type="similarity">
    <text evidence="1">Belongs to the ATPase B chain family.</text>
</comment>
<keyword id="KW-0066">ATP synthesis</keyword>
<keyword id="KW-0997">Cell inner membrane</keyword>
<keyword id="KW-1003">Cell membrane</keyword>
<keyword id="KW-0138">CF(0)</keyword>
<keyword id="KW-0375">Hydrogen ion transport</keyword>
<keyword id="KW-0406">Ion transport</keyword>
<keyword id="KW-0472">Membrane</keyword>
<keyword id="KW-1185">Reference proteome</keyword>
<keyword id="KW-0812">Transmembrane</keyword>
<keyword id="KW-1133">Transmembrane helix</keyword>
<keyword id="KW-0813">Transport</keyword>
<proteinExistence type="inferred from homology"/>
<sequence>MASILSPVPVLAAGGIADINPGLTLWTAITFLVMLAVLAKFAWGPIVKMLAERERSIREAIDSAKKERAEAERLLAAQKESLSKAQREAAELARRNQQEVEALRQELTAKARKEADELVAEARRQIAEELVKAKAELKAQVVDLAIDAASRLVKANLDEKSQRALVEEYIAQLPANRAA</sequence>
<accession>Q2IHP6</accession>
<gene>
    <name evidence="1" type="primary">atpF</name>
    <name type="ordered locus">Adeh_4338</name>
</gene>
<organism>
    <name type="scientific">Anaeromyxobacter dehalogenans (strain 2CP-C)</name>
    <dbReference type="NCBI Taxonomy" id="290397"/>
    <lineage>
        <taxon>Bacteria</taxon>
        <taxon>Pseudomonadati</taxon>
        <taxon>Myxococcota</taxon>
        <taxon>Myxococcia</taxon>
        <taxon>Myxococcales</taxon>
        <taxon>Cystobacterineae</taxon>
        <taxon>Anaeromyxobacteraceae</taxon>
        <taxon>Anaeromyxobacter</taxon>
    </lineage>
</organism>
<evidence type="ECO:0000255" key="1">
    <source>
        <dbReference type="HAMAP-Rule" id="MF_01398"/>
    </source>
</evidence>
<name>ATPF_ANADE</name>